<proteinExistence type="inferred from homology"/>
<comment type="function">
    <text evidence="1">This protein binds to 23S rRNA in the presence of protein L20.</text>
</comment>
<comment type="subunit">
    <text evidence="1">Part of the 50S ribosomal subunit. Contacts protein L20.</text>
</comment>
<comment type="similarity">
    <text evidence="1">Belongs to the bacterial ribosomal protein bL21 family.</text>
</comment>
<keyword id="KW-1185">Reference proteome</keyword>
<keyword id="KW-0687">Ribonucleoprotein</keyword>
<keyword id="KW-0689">Ribosomal protein</keyword>
<keyword id="KW-0694">RNA-binding</keyword>
<keyword id="KW-0699">rRNA-binding</keyword>
<protein>
    <recommendedName>
        <fullName evidence="1">Large ribosomal subunit protein bL21</fullName>
    </recommendedName>
    <alternativeName>
        <fullName evidence="2">50S ribosomal protein L21</fullName>
    </alternativeName>
</protein>
<organism>
    <name type="scientific">Xanthomonas campestris pv. campestris (strain ATCC 33913 / DSM 3586 / NCPPB 528 / LMG 568 / P 25)</name>
    <dbReference type="NCBI Taxonomy" id="190485"/>
    <lineage>
        <taxon>Bacteria</taxon>
        <taxon>Pseudomonadati</taxon>
        <taxon>Pseudomonadota</taxon>
        <taxon>Gammaproteobacteria</taxon>
        <taxon>Lysobacterales</taxon>
        <taxon>Lysobacteraceae</taxon>
        <taxon>Xanthomonas</taxon>
    </lineage>
</organism>
<name>RL21_XANCP</name>
<accession>Q8PBH2</accession>
<reference key="1">
    <citation type="journal article" date="2002" name="Nature">
        <title>Comparison of the genomes of two Xanthomonas pathogens with differing host specificities.</title>
        <authorList>
            <person name="da Silva A.C.R."/>
            <person name="Ferro J.A."/>
            <person name="Reinach F.C."/>
            <person name="Farah C.S."/>
            <person name="Furlan L.R."/>
            <person name="Quaggio R.B."/>
            <person name="Monteiro-Vitorello C.B."/>
            <person name="Van Sluys M.A."/>
            <person name="Almeida N.F. Jr."/>
            <person name="Alves L.M.C."/>
            <person name="do Amaral A.M."/>
            <person name="Bertolini M.C."/>
            <person name="Camargo L.E.A."/>
            <person name="Camarotte G."/>
            <person name="Cannavan F."/>
            <person name="Cardozo J."/>
            <person name="Chambergo F."/>
            <person name="Ciapina L.P."/>
            <person name="Cicarelli R.M.B."/>
            <person name="Coutinho L.L."/>
            <person name="Cursino-Santos J.R."/>
            <person name="El-Dorry H."/>
            <person name="Faria J.B."/>
            <person name="Ferreira A.J.S."/>
            <person name="Ferreira R.C.C."/>
            <person name="Ferro M.I.T."/>
            <person name="Formighieri E.F."/>
            <person name="Franco M.C."/>
            <person name="Greggio C.C."/>
            <person name="Gruber A."/>
            <person name="Katsuyama A.M."/>
            <person name="Kishi L.T."/>
            <person name="Leite R.P."/>
            <person name="Lemos E.G.M."/>
            <person name="Lemos M.V.F."/>
            <person name="Locali E.C."/>
            <person name="Machado M.A."/>
            <person name="Madeira A.M.B.N."/>
            <person name="Martinez-Rossi N.M."/>
            <person name="Martins E.C."/>
            <person name="Meidanis J."/>
            <person name="Menck C.F.M."/>
            <person name="Miyaki C.Y."/>
            <person name="Moon D.H."/>
            <person name="Moreira L.M."/>
            <person name="Novo M.T.M."/>
            <person name="Okura V.K."/>
            <person name="Oliveira M.C."/>
            <person name="Oliveira V.R."/>
            <person name="Pereira H.A."/>
            <person name="Rossi A."/>
            <person name="Sena J.A.D."/>
            <person name="Silva C."/>
            <person name="de Souza R.F."/>
            <person name="Spinola L.A.F."/>
            <person name="Takita M.A."/>
            <person name="Tamura R.E."/>
            <person name="Teixeira E.C."/>
            <person name="Tezza R.I.D."/>
            <person name="Trindade dos Santos M."/>
            <person name="Truffi D."/>
            <person name="Tsai S.M."/>
            <person name="White F.F."/>
            <person name="Setubal J.C."/>
            <person name="Kitajima J.P."/>
        </authorList>
    </citation>
    <scope>NUCLEOTIDE SEQUENCE [LARGE SCALE GENOMIC DNA]</scope>
    <source>
        <strain>ATCC 33913 / DSM 3586 / NCPPB 528 / LMG 568 / P 25</strain>
    </source>
</reference>
<feature type="chain" id="PRO_0000269428" description="Large ribosomal subunit protein bL21">
    <location>
        <begin position="1"/>
        <end position="106"/>
    </location>
</feature>
<evidence type="ECO:0000255" key="1">
    <source>
        <dbReference type="HAMAP-Rule" id="MF_01363"/>
    </source>
</evidence>
<evidence type="ECO:0000305" key="2"/>
<dbReference type="EMBL" id="AE008922">
    <property type="protein sequence ID" value="AAM40448.1"/>
    <property type="molecule type" value="Genomic_DNA"/>
</dbReference>
<dbReference type="RefSeq" id="NP_636524.1">
    <property type="nucleotide sequence ID" value="NC_003902.1"/>
</dbReference>
<dbReference type="RefSeq" id="WP_005989959.1">
    <property type="nucleotide sequence ID" value="NC_003902.1"/>
</dbReference>
<dbReference type="SMR" id="Q8PBH2"/>
<dbReference type="STRING" id="190485.XCC1149"/>
<dbReference type="EnsemblBacteria" id="AAM40448">
    <property type="protein sequence ID" value="AAM40448"/>
    <property type="gene ID" value="XCC1149"/>
</dbReference>
<dbReference type="GeneID" id="95583591"/>
<dbReference type="KEGG" id="xcc:XCC1149"/>
<dbReference type="PATRIC" id="fig|190485.4.peg.1229"/>
<dbReference type="eggNOG" id="COG0261">
    <property type="taxonomic scope" value="Bacteria"/>
</dbReference>
<dbReference type="HOGENOM" id="CLU_061463_3_3_6"/>
<dbReference type="OrthoDB" id="9813334at2"/>
<dbReference type="Proteomes" id="UP000001010">
    <property type="component" value="Chromosome"/>
</dbReference>
<dbReference type="GO" id="GO:0005737">
    <property type="term" value="C:cytoplasm"/>
    <property type="evidence" value="ECO:0007669"/>
    <property type="project" value="UniProtKB-ARBA"/>
</dbReference>
<dbReference type="GO" id="GO:1990904">
    <property type="term" value="C:ribonucleoprotein complex"/>
    <property type="evidence" value="ECO:0007669"/>
    <property type="project" value="UniProtKB-KW"/>
</dbReference>
<dbReference type="GO" id="GO:0005840">
    <property type="term" value="C:ribosome"/>
    <property type="evidence" value="ECO:0007669"/>
    <property type="project" value="UniProtKB-KW"/>
</dbReference>
<dbReference type="GO" id="GO:0019843">
    <property type="term" value="F:rRNA binding"/>
    <property type="evidence" value="ECO:0007669"/>
    <property type="project" value="UniProtKB-UniRule"/>
</dbReference>
<dbReference type="GO" id="GO:0003735">
    <property type="term" value="F:structural constituent of ribosome"/>
    <property type="evidence" value="ECO:0000318"/>
    <property type="project" value="GO_Central"/>
</dbReference>
<dbReference type="GO" id="GO:0006412">
    <property type="term" value="P:translation"/>
    <property type="evidence" value="ECO:0007669"/>
    <property type="project" value="UniProtKB-UniRule"/>
</dbReference>
<dbReference type="HAMAP" id="MF_01363">
    <property type="entry name" value="Ribosomal_bL21"/>
    <property type="match status" value="1"/>
</dbReference>
<dbReference type="InterPro" id="IPR028909">
    <property type="entry name" value="bL21-like"/>
</dbReference>
<dbReference type="InterPro" id="IPR036164">
    <property type="entry name" value="bL21-like_sf"/>
</dbReference>
<dbReference type="InterPro" id="IPR001787">
    <property type="entry name" value="Ribosomal_bL21"/>
</dbReference>
<dbReference type="InterPro" id="IPR018258">
    <property type="entry name" value="Ribosomal_bL21_CS"/>
</dbReference>
<dbReference type="NCBIfam" id="TIGR00061">
    <property type="entry name" value="L21"/>
    <property type="match status" value="1"/>
</dbReference>
<dbReference type="PANTHER" id="PTHR21349">
    <property type="entry name" value="50S RIBOSOMAL PROTEIN L21"/>
    <property type="match status" value="1"/>
</dbReference>
<dbReference type="PANTHER" id="PTHR21349:SF0">
    <property type="entry name" value="LARGE RIBOSOMAL SUBUNIT PROTEIN BL21M"/>
    <property type="match status" value="1"/>
</dbReference>
<dbReference type="Pfam" id="PF00829">
    <property type="entry name" value="Ribosomal_L21p"/>
    <property type="match status" value="1"/>
</dbReference>
<dbReference type="SUPFAM" id="SSF141091">
    <property type="entry name" value="L21p-like"/>
    <property type="match status" value="1"/>
</dbReference>
<dbReference type="PROSITE" id="PS01169">
    <property type="entry name" value="RIBOSOMAL_L21"/>
    <property type="match status" value="1"/>
</dbReference>
<gene>
    <name evidence="1" type="primary">rplU</name>
    <name type="ordered locus">XCC1149</name>
</gene>
<sequence length="106" mass="11824">MYAVLVTGGKQYRVAQGETLRVEKLEVEAGNEIKFDTILMLGDSDGIKLGDALKGASVTAKVVAHGRADKVRIIKFRRRKHHMKRQGHRQYYTEIEITGIAGGDKK</sequence>